<feature type="chain" id="PRO_0000367611" description="Glutamate--tRNA ligase 2">
    <location>
        <begin position="1"/>
        <end position="456"/>
    </location>
</feature>
<feature type="short sequence motif" description="'HIGH' region" evidence="1">
    <location>
        <begin position="8"/>
        <end position="18"/>
    </location>
</feature>
<feature type="short sequence motif" description="'KMSKS' region" evidence="1">
    <location>
        <begin position="249"/>
        <end position="253"/>
    </location>
</feature>
<feature type="binding site" evidence="1">
    <location>
        <position position="252"/>
    </location>
    <ligand>
        <name>ATP</name>
        <dbReference type="ChEBI" id="CHEBI:30616"/>
    </ligand>
</feature>
<sequence>MIKVRFAPSPTGYIHIGNTRIALFNWLYAQANNGTFILRYDDTDLERSKQEYIDGIMTDLEWLDIKPDEIHHQSKRFSRYDKVAETLKERGLLYPCYETVEELGRHRKIQLSRKLPPVYDRRALKLTKEDKRLLESQGRKPHWRFLLPNFESNPFQIKRTEISWDDIVKGKQTIDLASISDPVLIREDGSYLYTLPSVIDDIDMAITHIIRGEDHITNTGAQITIFEALNAKLPAFGHINLLTTVSGQGLSKRNSDLSICSLREEGFESMAVRCLSVLTGTSKNIEAHRDQKALLEHFSLQNTSKSAAKFDITDLISLNSHFVHELTYEEVKTRLEKLSICGEKAEYFWNTIRDNIDKVNDAALWWEIIHSDQSFDAVSFEDRAFLQQSVDLLPEGSLNDESWKIWTTALKEKTDRKGKALFMSLRLALTGRQHGPEMGKLLPLLGREKIINRLTI</sequence>
<name>SYE2_BARBK</name>
<reference key="1">
    <citation type="submission" date="2006-12" db="EMBL/GenBank/DDBJ databases">
        <authorList>
            <person name="Hendrix L."/>
            <person name="Mohamoud Y."/>
            <person name="Radune D."/>
            <person name="Shvartsbeyn A."/>
            <person name="Daugherty S."/>
            <person name="Dodson R."/>
            <person name="Durkin A.S."/>
            <person name="Harkins D."/>
            <person name="Huot H."/>
            <person name="Kothari S.P."/>
            <person name="Madupu R."/>
            <person name="Li J."/>
            <person name="Nelson W.C."/>
            <person name="Shrivastava S."/>
            <person name="Giglio M.G."/>
            <person name="Haft D."/>
            <person name="Selengut J."/>
            <person name="Fraser-Ligget C."/>
            <person name="Seshadri R."/>
        </authorList>
    </citation>
    <scope>NUCLEOTIDE SEQUENCE [LARGE SCALE GENOMIC DNA]</scope>
    <source>
        <strain>ATCC 35685 / KC583 / Herrer 020/F12,63</strain>
    </source>
</reference>
<gene>
    <name evidence="1" type="primary">gltX2</name>
    <name type="ordered locus">BARBAKC583_0607</name>
</gene>
<accession>A1USG2</accession>
<keyword id="KW-0030">Aminoacyl-tRNA synthetase</keyword>
<keyword id="KW-0067">ATP-binding</keyword>
<keyword id="KW-0963">Cytoplasm</keyword>
<keyword id="KW-0436">Ligase</keyword>
<keyword id="KW-0547">Nucleotide-binding</keyword>
<keyword id="KW-0648">Protein biosynthesis</keyword>
<comment type="function">
    <text evidence="1">Catalyzes the attachment of glutamate to tRNA(Glu) in a two-step reaction: glutamate is first activated by ATP to form Glu-AMP and then transferred to the acceptor end of tRNA(Glu).</text>
</comment>
<comment type="catalytic activity">
    <reaction evidence="1">
        <text>tRNA(Glu) + L-glutamate + ATP = L-glutamyl-tRNA(Glu) + AMP + diphosphate</text>
        <dbReference type="Rhea" id="RHEA:23540"/>
        <dbReference type="Rhea" id="RHEA-COMP:9663"/>
        <dbReference type="Rhea" id="RHEA-COMP:9680"/>
        <dbReference type="ChEBI" id="CHEBI:29985"/>
        <dbReference type="ChEBI" id="CHEBI:30616"/>
        <dbReference type="ChEBI" id="CHEBI:33019"/>
        <dbReference type="ChEBI" id="CHEBI:78442"/>
        <dbReference type="ChEBI" id="CHEBI:78520"/>
        <dbReference type="ChEBI" id="CHEBI:456215"/>
        <dbReference type="EC" id="6.1.1.17"/>
    </reaction>
</comment>
<comment type="subunit">
    <text evidence="1">Monomer.</text>
</comment>
<comment type="subcellular location">
    <subcellularLocation>
        <location evidence="1">Cytoplasm</location>
    </subcellularLocation>
</comment>
<comment type="similarity">
    <text evidence="1">Belongs to the class-I aminoacyl-tRNA synthetase family. Glutamate--tRNA ligase type 1 subfamily.</text>
</comment>
<evidence type="ECO:0000255" key="1">
    <source>
        <dbReference type="HAMAP-Rule" id="MF_00022"/>
    </source>
</evidence>
<proteinExistence type="inferred from homology"/>
<protein>
    <recommendedName>
        <fullName evidence="1">Glutamate--tRNA ligase 2</fullName>
        <ecNumber evidence="1">6.1.1.17</ecNumber>
    </recommendedName>
    <alternativeName>
        <fullName evidence="1">Glutamyl-tRNA synthetase 2</fullName>
        <shortName evidence="1">GluRS 2</shortName>
    </alternativeName>
</protein>
<dbReference type="EC" id="6.1.1.17" evidence="1"/>
<dbReference type="EMBL" id="CP000524">
    <property type="protein sequence ID" value="ABM44944.1"/>
    <property type="molecule type" value="Genomic_DNA"/>
</dbReference>
<dbReference type="SMR" id="A1USG2"/>
<dbReference type="STRING" id="360095.BARBAKC583_0607"/>
<dbReference type="GeneID" id="4684716"/>
<dbReference type="KEGG" id="bbk:BARBAKC583_0607"/>
<dbReference type="PATRIC" id="fig|360095.6.peg.593"/>
<dbReference type="eggNOG" id="COG0008">
    <property type="taxonomic scope" value="Bacteria"/>
</dbReference>
<dbReference type="eggNOG" id="COG1384">
    <property type="taxonomic scope" value="Bacteria"/>
</dbReference>
<dbReference type="HOGENOM" id="CLU_015768_6_1_5"/>
<dbReference type="OrthoDB" id="9807503at2"/>
<dbReference type="Proteomes" id="UP000000643">
    <property type="component" value="Chromosome"/>
</dbReference>
<dbReference type="GO" id="GO:0005737">
    <property type="term" value="C:cytoplasm"/>
    <property type="evidence" value="ECO:0007669"/>
    <property type="project" value="UniProtKB-SubCell"/>
</dbReference>
<dbReference type="GO" id="GO:0005524">
    <property type="term" value="F:ATP binding"/>
    <property type="evidence" value="ECO:0007669"/>
    <property type="project" value="UniProtKB-UniRule"/>
</dbReference>
<dbReference type="GO" id="GO:0004818">
    <property type="term" value="F:glutamate-tRNA ligase activity"/>
    <property type="evidence" value="ECO:0007669"/>
    <property type="project" value="UniProtKB-UniRule"/>
</dbReference>
<dbReference type="GO" id="GO:0000049">
    <property type="term" value="F:tRNA binding"/>
    <property type="evidence" value="ECO:0007669"/>
    <property type="project" value="InterPro"/>
</dbReference>
<dbReference type="GO" id="GO:0006424">
    <property type="term" value="P:glutamyl-tRNA aminoacylation"/>
    <property type="evidence" value="ECO:0007669"/>
    <property type="project" value="UniProtKB-UniRule"/>
</dbReference>
<dbReference type="Gene3D" id="1.10.10.350">
    <property type="match status" value="1"/>
</dbReference>
<dbReference type="Gene3D" id="3.40.50.620">
    <property type="entry name" value="HUPs"/>
    <property type="match status" value="1"/>
</dbReference>
<dbReference type="HAMAP" id="MF_00022">
    <property type="entry name" value="Glu_tRNA_synth_type1"/>
    <property type="match status" value="1"/>
</dbReference>
<dbReference type="InterPro" id="IPR045462">
    <property type="entry name" value="aa-tRNA-synth_I_cd-bd"/>
</dbReference>
<dbReference type="InterPro" id="IPR020751">
    <property type="entry name" value="aa-tRNA-synth_I_codon-bd_sub2"/>
</dbReference>
<dbReference type="InterPro" id="IPR001412">
    <property type="entry name" value="aa-tRNA-synth_I_CS"/>
</dbReference>
<dbReference type="InterPro" id="IPR008925">
    <property type="entry name" value="aa_tRNA-synth_I_cd-bd_sf"/>
</dbReference>
<dbReference type="InterPro" id="IPR004527">
    <property type="entry name" value="Glu-tRNA-ligase_bac/mito"/>
</dbReference>
<dbReference type="InterPro" id="IPR000924">
    <property type="entry name" value="Glu/Gln-tRNA-synth"/>
</dbReference>
<dbReference type="InterPro" id="IPR020058">
    <property type="entry name" value="Glu/Gln-tRNA-synth_Ib_cat-dom"/>
</dbReference>
<dbReference type="InterPro" id="IPR049940">
    <property type="entry name" value="GluQ/Sye"/>
</dbReference>
<dbReference type="InterPro" id="IPR014729">
    <property type="entry name" value="Rossmann-like_a/b/a_fold"/>
</dbReference>
<dbReference type="NCBIfam" id="TIGR00464">
    <property type="entry name" value="gltX_bact"/>
    <property type="match status" value="1"/>
</dbReference>
<dbReference type="PANTHER" id="PTHR43311">
    <property type="entry name" value="GLUTAMATE--TRNA LIGASE"/>
    <property type="match status" value="1"/>
</dbReference>
<dbReference type="PANTHER" id="PTHR43311:SF2">
    <property type="entry name" value="GLUTAMATE--TRNA LIGASE, MITOCHONDRIAL-RELATED"/>
    <property type="match status" value="1"/>
</dbReference>
<dbReference type="Pfam" id="PF19269">
    <property type="entry name" value="Anticodon_2"/>
    <property type="match status" value="1"/>
</dbReference>
<dbReference type="Pfam" id="PF00749">
    <property type="entry name" value="tRNA-synt_1c"/>
    <property type="match status" value="1"/>
</dbReference>
<dbReference type="PRINTS" id="PR00987">
    <property type="entry name" value="TRNASYNTHGLU"/>
</dbReference>
<dbReference type="SUPFAM" id="SSF48163">
    <property type="entry name" value="An anticodon-binding domain of class I aminoacyl-tRNA synthetases"/>
    <property type="match status" value="1"/>
</dbReference>
<dbReference type="SUPFAM" id="SSF52374">
    <property type="entry name" value="Nucleotidylyl transferase"/>
    <property type="match status" value="1"/>
</dbReference>
<dbReference type="PROSITE" id="PS00178">
    <property type="entry name" value="AA_TRNA_LIGASE_I"/>
    <property type="match status" value="1"/>
</dbReference>
<organism>
    <name type="scientific">Bartonella bacilliformis (strain ATCC 35685 / KC583 / Herrer 020/F12,63)</name>
    <dbReference type="NCBI Taxonomy" id="360095"/>
    <lineage>
        <taxon>Bacteria</taxon>
        <taxon>Pseudomonadati</taxon>
        <taxon>Pseudomonadota</taxon>
        <taxon>Alphaproteobacteria</taxon>
        <taxon>Hyphomicrobiales</taxon>
        <taxon>Bartonellaceae</taxon>
        <taxon>Bartonella</taxon>
    </lineage>
</organism>